<proteinExistence type="inferred from homology"/>
<name>NDHH_NICSY</name>
<protein>
    <recommendedName>
        <fullName evidence="1">NAD(P)H-quinone oxidoreductase subunit H, chloroplastic</fullName>
        <ecNumber evidence="1">7.1.1.-</ecNumber>
    </recommendedName>
    <alternativeName>
        <fullName>NAD(P)H dehydrogenase subunit H</fullName>
    </alternativeName>
    <alternativeName>
        <fullName evidence="1">NADH-plastoquinone oxidoreductase 49 kDa subunit</fullName>
    </alternativeName>
    <alternativeName>
        <fullName evidence="1">NADH-plastoquinone oxidoreductase subunit H</fullName>
    </alternativeName>
</protein>
<accession>Q3C1P8</accession>
<keyword id="KW-0150">Chloroplast</keyword>
<keyword id="KW-0472">Membrane</keyword>
<keyword id="KW-0520">NAD</keyword>
<keyword id="KW-0521">NADP</keyword>
<keyword id="KW-0934">Plastid</keyword>
<keyword id="KW-0618">Plastoquinone</keyword>
<keyword id="KW-0874">Quinone</keyword>
<keyword id="KW-1185">Reference proteome</keyword>
<keyword id="KW-0793">Thylakoid</keyword>
<keyword id="KW-1278">Translocase</keyword>
<keyword id="KW-0813">Transport</keyword>
<reference key="1">
    <citation type="journal article" date="2006" name="Mol. Genet. Genomics">
        <title>The chloroplast genome of Nicotiana sylvestris and Nicotiana tomentosiformis: complete sequencing confirms that the Nicotiana sylvestris progenitor is the maternal genome donor of Nicotiana tabacum.</title>
        <authorList>
            <person name="Yukawa M."/>
            <person name="Tsudzuki T."/>
            <person name="Sugiura M."/>
        </authorList>
    </citation>
    <scope>NUCLEOTIDE SEQUENCE [LARGE SCALE GENOMIC DNA]</scope>
</reference>
<comment type="function">
    <text evidence="1">NDH shuttles electrons from NAD(P)H:plastoquinone, via FMN and iron-sulfur (Fe-S) centers, to quinones in the photosynthetic chain and possibly in a chloroplast respiratory chain. The immediate electron acceptor for the enzyme in this species is believed to be plastoquinone. Couples the redox reaction to proton translocation, and thus conserves the redox energy in a proton gradient.</text>
</comment>
<comment type="catalytic activity">
    <reaction evidence="1">
        <text>a plastoquinone + NADH + (n+1) H(+)(in) = a plastoquinol + NAD(+) + n H(+)(out)</text>
        <dbReference type="Rhea" id="RHEA:42608"/>
        <dbReference type="Rhea" id="RHEA-COMP:9561"/>
        <dbReference type="Rhea" id="RHEA-COMP:9562"/>
        <dbReference type="ChEBI" id="CHEBI:15378"/>
        <dbReference type="ChEBI" id="CHEBI:17757"/>
        <dbReference type="ChEBI" id="CHEBI:57540"/>
        <dbReference type="ChEBI" id="CHEBI:57945"/>
        <dbReference type="ChEBI" id="CHEBI:62192"/>
    </reaction>
</comment>
<comment type="catalytic activity">
    <reaction evidence="1">
        <text>a plastoquinone + NADPH + (n+1) H(+)(in) = a plastoquinol + NADP(+) + n H(+)(out)</text>
        <dbReference type="Rhea" id="RHEA:42612"/>
        <dbReference type="Rhea" id="RHEA-COMP:9561"/>
        <dbReference type="Rhea" id="RHEA-COMP:9562"/>
        <dbReference type="ChEBI" id="CHEBI:15378"/>
        <dbReference type="ChEBI" id="CHEBI:17757"/>
        <dbReference type="ChEBI" id="CHEBI:57783"/>
        <dbReference type="ChEBI" id="CHEBI:58349"/>
        <dbReference type="ChEBI" id="CHEBI:62192"/>
    </reaction>
</comment>
<comment type="subunit">
    <text evidence="1">NDH is composed of at least 16 different subunits, 5 of which are encoded in the nucleus.</text>
</comment>
<comment type="subcellular location">
    <subcellularLocation>
        <location evidence="1">Plastid</location>
        <location evidence="1">Chloroplast thylakoid membrane</location>
        <topology evidence="1">Peripheral membrane protein</topology>
        <orientation evidence="1">Stromal side</orientation>
    </subcellularLocation>
</comment>
<comment type="similarity">
    <text evidence="1">Belongs to the complex I 49 kDa subunit family.</text>
</comment>
<evidence type="ECO:0000255" key="1">
    <source>
        <dbReference type="HAMAP-Rule" id="MF_01358"/>
    </source>
</evidence>
<organism>
    <name type="scientific">Nicotiana sylvestris</name>
    <name type="common">Wood tobacco</name>
    <name type="synonym">South American tobacco</name>
    <dbReference type="NCBI Taxonomy" id="4096"/>
    <lineage>
        <taxon>Eukaryota</taxon>
        <taxon>Viridiplantae</taxon>
        <taxon>Streptophyta</taxon>
        <taxon>Embryophyta</taxon>
        <taxon>Tracheophyta</taxon>
        <taxon>Spermatophyta</taxon>
        <taxon>Magnoliopsida</taxon>
        <taxon>eudicotyledons</taxon>
        <taxon>Gunneridae</taxon>
        <taxon>Pentapetalae</taxon>
        <taxon>asterids</taxon>
        <taxon>lamiids</taxon>
        <taxon>Solanales</taxon>
        <taxon>Solanaceae</taxon>
        <taxon>Nicotianoideae</taxon>
        <taxon>Nicotianeae</taxon>
        <taxon>Nicotiana</taxon>
    </lineage>
</organism>
<sequence length="393" mass="45488">MTAPTTRKDLMIVNMGPQHPSMHGVLRLIVTLDGEDVVDCEPILGYLHRGMEKIAENRTIIQYLPYVTRWDYLATMFTEAITINGPEQLGNIQVPKRASYIRVIMLELSRIASHLLWLGPFMADIGAQTPFFYIFRERELIYDLFEAATGMRMMHNYFRIGGVAADLPYGWIDKCLDFCDYFLTGVAEYQKLITRNPIFLERVEGVGIIGGDEALNWGLSGPMLRASGIEWDLRKVDHYESYDEFDWQVQWQREGDSLARYLVRIGEMTESIKIIQQALEGIPGGPYENLEIRRFDRLKDPEWNDFEYRFISKKPSPTFELSKQELYVRVEAPKGELGIFLIGDQSVFPWRWKIRPPGFINLQILPQLVKRMKLADIMTILGSIDIIMGEVDR</sequence>
<geneLocation type="chloroplast"/>
<dbReference type="EC" id="7.1.1.-" evidence="1"/>
<dbReference type="EMBL" id="AB237912">
    <property type="protein sequence ID" value="BAE46720.1"/>
    <property type="molecule type" value="Genomic_DNA"/>
</dbReference>
<dbReference type="RefSeq" id="YP_358743.1">
    <property type="nucleotide sequence ID" value="NC_007500.1"/>
</dbReference>
<dbReference type="SMR" id="Q3C1P8"/>
<dbReference type="GeneID" id="3735066"/>
<dbReference type="KEGG" id="nsy:3735066"/>
<dbReference type="OrthoDB" id="17447at4085"/>
<dbReference type="Proteomes" id="UP000189701">
    <property type="component" value="Chloroplast Pltd"/>
</dbReference>
<dbReference type="GO" id="GO:0009535">
    <property type="term" value="C:chloroplast thylakoid membrane"/>
    <property type="evidence" value="ECO:0007669"/>
    <property type="project" value="UniProtKB-SubCell"/>
</dbReference>
<dbReference type="GO" id="GO:0051287">
    <property type="term" value="F:NAD binding"/>
    <property type="evidence" value="ECO:0007669"/>
    <property type="project" value="InterPro"/>
</dbReference>
<dbReference type="GO" id="GO:0016655">
    <property type="term" value="F:oxidoreductase activity, acting on NAD(P)H, quinone or similar compound as acceptor"/>
    <property type="evidence" value="ECO:0007669"/>
    <property type="project" value="UniProtKB-UniRule"/>
</dbReference>
<dbReference type="GO" id="GO:0048038">
    <property type="term" value="F:quinone binding"/>
    <property type="evidence" value="ECO:0007669"/>
    <property type="project" value="UniProtKB-KW"/>
</dbReference>
<dbReference type="GO" id="GO:0019684">
    <property type="term" value="P:photosynthesis, light reaction"/>
    <property type="evidence" value="ECO:0007669"/>
    <property type="project" value="UniProtKB-UniRule"/>
</dbReference>
<dbReference type="FunFam" id="1.10.645.10:FF:000003">
    <property type="entry name" value="NAD(P)H-quinone oxidoreductase subunit H, chloroplastic"/>
    <property type="match status" value="1"/>
</dbReference>
<dbReference type="Gene3D" id="1.10.645.10">
    <property type="entry name" value="Cytochrome-c3 Hydrogenase, chain B"/>
    <property type="match status" value="1"/>
</dbReference>
<dbReference type="HAMAP" id="MF_01358">
    <property type="entry name" value="NDH1_NuoD"/>
    <property type="match status" value="1"/>
</dbReference>
<dbReference type="InterPro" id="IPR001135">
    <property type="entry name" value="NADH_Q_OxRdtase_suD"/>
</dbReference>
<dbReference type="InterPro" id="IPR014029">
    <property type="entry name" value="NADH_UbQ_OxRdtase_49kDa_CS"/>
</dbReference>
<dbReference type="InterPro" id="IPR022885">
    <property type="entry name" value="NDH1_su_D/H"/>
</dbReference>
<dbReference type="InterPro" id="IPR029014">
    <property type="entry name" value="NiFe-Hase_large"/>
</dbReference>
<dbReference type="NCBIfam" id="NF004739">
    <property type="entry name" value="PRK06075.1"/>
    <property type="match status" value="1"/>
</dbReference>
<dbReference type="NCBIfam" id="NF005649">
    <property type="entry name" value="PRK07415.1"/>
    <property type="match status" value="1"/>
</dbReference>
<dbReference type="PANTHER" id="PTHR11993:SF10">
    <property type="entry name" value="NADH DEHYDROGENASE [UBIQUINONE] IRON-SULFUR PROTEIN 2, MITOCHONDRIAL"/>
    <property type="match status" value="1"/>
</dbReference>
<dbReference type="PANTHER" id="PTHR11993">
    <property type="entry name" value="NADH-UBIQUINONE OXIDOREDUCTASE 49 KDA SUBUNIT"/>
    <property type="match status" value="1"/>
</dbReference>
<dbReference type="Pfam" id="PF00346">
    <property type="entry name" value="Complex1_49kDa"/>
    <property type="match status" value="1"/>
</dbReference>
<dbReference type="SUPFAM" id="SSF56762">
    <property type="entry name" value="HydB/Nqo4-like"/>
    <property type="match status" value="1"/>
</dbReference>
<dbReference type="PROSITE" id="PS00535">
    <property type="entry name" value="COMPLEX1_49K"/>
    <property type="match status" value="1"/>
</dbReference>
<gene>
    <name evidence="1" type="primary">ndhH</name>
</gene>
<feature type="chain" id="PRO_0000358008" description="NAD(P)H-quinone oxidoreductase subunit H, chloroplastic">
    <location>
        <begin position="1"/>
        <end position="393"/>
    </location>
</feature>